<keyword id="KW-0222">Digestion</keyword>
<keyword id="KW-0903">Direct protein sequencing</keyword>
<keyword id="KW-0378">Hydrolase</keyword>
<keyword id="KW-0645">Protease</keyword>
<keyword id="KW-0964">Secreted</keyword>
<keyword id="KW-0720">Serine protease</keyword>
<protein>
    <recommendedName>
        <fullName>Trypsin</fullName>
        <ecNumber>3.4.21.4</ecNumber>
    </recommendedName>
</protein>
<sequence length="21" mass="2184">IVGGTAADISQFPHQLSLQTT</sequence>
<name>TRYP_APIMS</name>
<proteinExistence type="evidence at protein level"/>
<organism>
    <name type="scientific">Apis mellifera scutellata</name>
    <name type="common">Africanized honey bee</name>
    <dbReference type="NCBI Taxonomy" id="212527"/>
    <lineage>
        <taxon>Eukaryota</taxon>
        <taxon>Metazoa</taxon>
        <taxon>Ecdysozoa</taxon>
        <taxon>Arthropoda</taxon>
        <taxon>Hexapoda</taxon>
        <taxon>Insecta</taxon>
        <taxon>Pterygota</taxon>
        <taxon>Neoptera</taxon>
        <taxon>Endopterygota</taxon>
        <taxon>Hymenoptera</taxon>
        <taxon>Apocrita</taxon>
        <taxon>Aculeata</taxon>
        <taxon>Apoidea</taxon>
        <taxon>Anthophila</taxon>
        <taxon>Apidae</taxon>
        <taxon>Apis</taxon>
    </lineage>
</organism>
<feature type="chain" id="PRO_0000088716" description="Trypsin">
    <location>
        <begin position="1"/>
        <end position="21" status="greater than"/>
    </location>
</feature>
<feature type="non-terminal residue" evidence="2">
    <location>
        <position position="21"/>
    </location>
</feature>
<comment type="catalytic activity">
    <reaction evidence="1">
        <text>Preferential cleavage: Arg-|-Xaa, Lys-|-Xaa.</text>
        <dbReference type="EC" id="3.4.21.4"/>
    </reaction>
</comment>
<comment type="subcellular location">
    <subcellularLocation>
        <location>Secreted</location>
        <location>Extracellular space</location>
    </subcellularLocation>
</comment>
<comment type="similarity">
    <text evidence="2">Belongs to the peptidase S1 family.</text>
</comment>
<evidence type="ECO:0000250" key="1">
    <source>
        <dbReference type="UniProtKB" id="P35004"/>
    </source>
</evidence>
<evidence type="ECO:0000305" key="2"/>
<dbReference type="EC" id="3.4.21.4"/>
<dbReference type="GO" id="GO:0005576">
    <property type="term" value="C:extracellular region"/>
    <property type="evidence" value="ECO:0007669"/>
    <property type="project" value="UniProtKB-SubCell"/>
</dbReference>
<dbReference type="GO" id="GO:0004252">
    <property type="term" value="F:serine-type endopeptidase activity"/>
    <property type="evidence" value="ECO:0007669"/>
    <property type="project" value="UniProtKB-EC"/>
</dbReference>
<dbReference type="GO" id="GO:0007586">
    <property type="term" value="P:digestion"/>
    <property type="evidence" value="ECO:0007669"/>
    <property type="project" value="UniProtKB-KW"/>
</dbReference>
<dbReference type="GO" id="GO:0006508">
    <property type="term" value="P:proteolysis"/>
    <property type="evidence" value="ECO:0007669"/>
    <property type="project" value="UniProtKB-KW"/>
</dbReference>
<accession>P83348</accession>
<reference evidence="2" key="1">
    <citation type="thesis" date="2002" institute="University of Sao Paulo" country="Brazil">
        <authorList>
            <person name="Takahashi M."/>
        </authorList>
    </citation>
    <scope>PROTEIN SEQUENCE</scope>
    <source>
        <strain>Brazilian</strain>
        <tissue>Midgut</tissue>
    </source>
</reference>